<reference key="1">
    <citation type="journal article" date="1998" name="Arch. Biochem. Biophys.">
        <title>Characterization of two cDNA clones which encode O-methyltransferases for the methylation of both flavonoid and phenylpropanoid compounds.</title>
        <authorList>
            <person name="Gauthier A."/>
            <person name="Gulick P.J."/>
            <person name="Ibrahim R.K."/>
        </authorList>
    </citation>
    <scope>NUCLEOTIDE SEQUENCE [MRNA]</scope>
    <scope>FUNCTION</scope>
    <scope>CATALYTIC ACTIVITY</scope>
    <scope>BIOPHYSICOCHEMICAL PROPERTIES</scope>
    <source>
        <tissue>Leaf</tissue>
    </source>
</reference>
<gene>
    <name evidence="5" type="primary">OMT2</name>
</gene>
<evidence type="ECO:0000250" key="1">
    <source>
        <dbReference type="UniProtKB" id="F1DBB3"/>
    </source>
</evidence>
<evidence type="ECO:0000250" key="2">
    <source>
        <dbReference type="UniProtKB" id="P28002"/>
    </source>
</evidence>
<evidence type="ECO:0000255" key="3">
    <source>
        <dbReference type="PROSITE-ProRule" id="PRU01020"/>
    </source>
</evidence>
<evidence type="ECO:0000269" key="4">
    <source>
    </source>
</evidence>
<evidence type="ECO:0000303" key="5">
    <source>
    </source>
</evidence>
<evidence type="ECO:0000305" key="6"/>
<dbReference type="EC" id="2.1.1.42" evidence="4"/>
<dbReference type="EMBL" id="U16793">
    <property type="protein sequence ID" value="AAA86982.1"/>
    <property type="molecule type" value="mRNA"/>
</dbReference>
<dbReference type="SMR" id="Q42653"/>
<dbReference type="KEGG" id="ag:AAA86982"/>
<dbReference type="BioCyc" id="MetaCyc:MONOMER-17791"/>
<dbReference type="GO" id="GO:0047763">
    <property type="term" value="F:caffeate O-methyltransferase activity"/>
    <property type="evidence" value="ECO:0007669"/>
    <property type="project" value="RHEA"/>
</dbReference>
<dbReference type="GO" id="GO:0102822">
    <property type="term" value="F:flavone 3'-O-methyltransferase activity"/>
    <property type="evidence" value="ECO:0000314"/>
    <property type="project" value="UniProtKB"/>
</dbReference>
<dbReference type="GO" id="GO:0046983">
    <property type="term" value="F:protein dimerization activity"/>
    <property type="evidence" value="ECO:0007669"/>
    <property type="project" value="InterPro"/>
</dbReference>
<dbReference type="GO" id="GO:0030755">
    <property type="term" value="F:quercetin 3-O-methyltransferase activity"/>
    <property type="evidence" value="ECO:0000314"/>
    <property type="project" value="UniProtKB"/>
</dbReference>
<dbReference type="GO" id="GO:0009812">
    <property type="term" value="P:flavonoid metabolic process"/>
    <property type="evidence" value="ECO:0000314"/>
    <property type="project" value="UniProtKB"/>
</dbReference>
<dbReference type="GO" id="GO:0032259">
    <property type="term" value="P:methylation"/>
    <property type="evidence" value="ECO:0007669"/>
    <property type="project" value="UniProtKB-KW"/>
</dbReference>
<dbReference type="CDD" id="cd02440">
    <property type="entry name" value="AdoMet_MTases"/>
    <property type="match status" value="1"/>
</dbReference>
<dbReference type="FunFam" id="1.10.10.10:FF:000357">
    <property type="entry name" value="Caffeic acid 3-O-methyltransferase"/>
    <property type="match status" value="1"/>
</dbReference>
<dbReference type="FunFam" id="3.40.50.150:FF:000061">
    <property type="entry name" value="Caffeic acid O-methyltransferase"/>
    <property type="match status" value="1"/>
</dbReference>
<dbReference type="Gene3D" id="3.40.50.150">
    <property type="entry name" value="Vaccinia Virus protein VP39"/>
    <property type="match status" value="1"/>
</dbReference>
<dbReference type="Gene3D" id="1.10.10.10">
    <property type="entry name" value="Winged helix-like DNA-binding domain superfamily/Winged helix DNA-binding domain"/>
    <property type="match status" value="1"/>
</dbReference>
<dbReference type="InterPro" id="IPR016461">
    <property type="entry name" value="COMT-like"/>
</dbReference>
<dbReference type="InterPro" id="IPR001077">
    <property type="entry name" value="O_MeTrfase_dom"/>
</dbReference>
<dbReference type="InterPro" id="IPR012967">
    <property type="entry name" value="Plant_O-MeTrfase_dimerisation"/>
</dbReference>
<dbReference type="InterPro" id="IPR029063">
    <property type="entry name" value="SAM-dependent_MTases_sf"/>
</dbReference>
<dbReference type="InterPro" id="IPR036388">
    <property type="entry name" value="WH-like_DNA-bd_sf"/>
</dbReference>
<dbReference type="InterPro" id="IPR036390">
    <property type="entry name" value="WH_DNA-bd_sf"/>
</dbReference>
<dbReference type="PANTHER" id="PTHR11746">
    <property type="entry name" value="O-METHYLTRANSFERASE"/>
    <property type="match status" value="1"/>
</dbReference>
<dbReference type="Pfam" id="PF08100">
    <property type="entry name" value="Dimerisation"/>
    <property type="match status" value="1"/>
</dbReference>
<dbReference type="Pfam" id="PF00891">
    <property type="entry name" value="Methyltransf_2"/>
    <property type="match status" value="1"/>
</dbReference>
<dbReference type="PIRSF" id="PIRSF005739">
    <property type="entry name" value="O-mtase"/>
    <property type="match status" value="1"/>
</dbReference>
<dbReference type="SUPFAM" id="SSF53335">
    <property type="entry name" value="S-adenosyl-L-methionine-dependent methyltransferases"/>
    <property type="match status" value="1"/>
</dbReference>
<dbReference type="SUPFAM" id="SSF46785">
    <property type="entry name" value="Winged helix' DNA-binding domain"/>
    <property type="match status" value="1"/>
</dbReference>
<dbReference type="PROSITE" id="PS51683">
    <property type="entry name" value="SAM_OMT_II"/>
    <property type="match status" value="1"/>
</dbReference>
<accession>Q42653</accession>
<protein>
    <recommendedName>
        <fullName evidence="6">Flavone 3'-O-methyltransferase OMT2</fullName>
        <ecNumber evidence="4">2.1.1.42</ecNumber>
    </recommendedName>
</protein>
<organism>
    <name type="scientific">Chrysosplenium americanum</name>
    <name type="common">American golden saxifrage</name>
    <dbReference type="NCBI Taxonomy" id="36749"/>
    <lineage>
        <taxon>Eukaryota</taxon>
        <taxon>Viridiplantae</taxon>
        <taxon>Streptophyta</taxon>
        <taxon>Embryophyta</taxon>
        <taxon>Tracheophyta</taxon>
        <taxon>Spermatophyta</taxon>
        <taxon>Magnoliopsida</taxon>
        <taxon>eudicotyledons</taxon>
        <taxon>Gunneridae</taxon>
        <taxon>Pentapetalae</taxon>
        <taxon>Saxifragales</taxon>
        <taxon>Saxifragaceae</taxon>
        <taxon>Chrysosplenieae</taxon>
        <taxon>Chrysosplenium</taxon>
    </lineage>
</organism>
<keyword id="KW-0489">Methyltransferase</keyword>
<keyword id="KW-0949">S-adenosyl-L-methionine</keyword>
<keyword id="KW-0808">Transferase</keyword>
<feature type="chain" id="PRO_0000063216" description="Flavone 3'-O-methyltransferase OMT2">
    <location>
        <begin position="1"/>
        <end position="343"/>
    </location>
</feature>
<feature type="active site" description="Proton acceptor" evidence="3">
    <location>
        <position position="245"/>
    </location>
</feature>
<feature type="active site" evidence="1">
    <location>
        <position position="273"/>
    </location>
</feature>
<feature type="active site" evidence="1">
    <location>
        <position position="305"/>
    </location>
</feature>
<feature type="binding site" evidence="2">
    <location>
        <position position="107"/>
    </location>
    <ligand>
        <name>(E)-ferulate</name>
        <dbReference type="ChEBI" id="CHEBI:29749"/>
    </ligand>
</feature>
<feature type="binding site" evidence="2">
    <location>
        <position position="184"/>
    </location>
    <ligand>
        <name>S-adenosyl-L-homocysteine</name>
        <dbReference type="ChEBI" id="CHEBI:57856"/>
    </ligand>
</feature>
<feature type="binding site" evidence="2">
    <location>
        <position position="207"/>
    </location>
    <ligand>
        <name>S-adenosyl-L-homocysteine</name>
        <dbReference type="ChEBI" id="CHEBI:57856"/>
    </ligand>
</feature>
<feature type="binding site" evidence="2">
    <location>
        <position position="227"/>
    </location>
    <ligand>
        <name>S-adenosyl-L-homocysteine</name>
        <dbReference type="ChEBI" id="CHEBI:57856"/>
    </ligand>
</feature>
<feature type="binding site" evidence="2">
    <location>
        <position position="228"/>
    </location>
    <ligand>
        <name>S-adenosyl-L-homocysteine</name>
        <dbReference type="ChEBI" id="CHEBI:57856"/>
    </ligand>
</feature>
<feature type="binding site" evidence="2">
    <location>
        <position position="240"/>
    </location>
    <ligand>
        <name>S-adenosyl-L-homocysteine</name>
        <dbReference type="ChEBI" id="CHEBI:57856"/>
    </ligand>
</feature>
<feature type="binding site" evidence="2">
    <location>
        <position position="241"/>
    </location>
    <ligand>
        <name>S-adenosyl-L-homocysteine</name>
        <dbReference type="ChEBI" id="CHEBI:57856"/>
    </ligand>
</feature>
<feature type="binding site" evidence="2">
    <location>
        <position position="246"/>
    </location>
    <ligand>
        <name>(E)-5-hydroxyferulate</name>
        <dbReference type="ChEBI" id="CHEBI:144381"/>
    </ligand>
</feature>
<sequence length="343" mass="37868">MLFAMQLACASVLPMVLKSAIELDLLEIIRGQDTCMSPTEIASHLPTTNPDAPAMVDRILRLLSCYSVVTCSVRSVDDQRVYGLAPVCKYLTKNQDGVSIAALCLMNQDKVLMESWYHLKDAVLDGGIPFNKAYGMSSFEYHGTDPRFNKVFNRGMSDHSTITMKKVFQTYQGFQGLTSLVDVGGGTGATLTMILSKYPTIRCINFDLPHVIEDAPEYPGIEHVGGDMFVSVPKGDAIFMKWICHDWSDEHCLKLLKNCYDALPNNGKVILAECILPEVPDSSLATKGVVHIDVITVAHNPGGKERTEKEFEALAKAAGFQGFQVFCNAFNTYIIEFSKKICN</sequence>
<comment type="function">
    <text evidence="4">Catalyzes the 3'-O-methylation of the flavonoids luteolin and quercetin (PubMed:9514654). Catalyzes the 3- of 5-O-methylation of the phenylpropanoids caffeate and 5-hydroxyferulate (PubMed:9514654). Substrate preference is 5-hydroxyferulate &gt; luteolin &gt; quercetin &gt; caffeate (PubMed:9514654). Apigenin, kempferol and 3,4-dimethylquercetin do not seem to be substrates for methylation (PubMed:9514654).</text>
</comment>
<comment type="catalytic activity">
    <reaction evidence="4">
        <text>(E)-5-hydroxyferulate + S-adenosyl-L-methionine = (E)-sinapate + S-adenosyl-L-homocysteine + H(+)</text>
        <dbReference type="Rhea" id="RHEA:60952"/>
        <dbReference type="ChEBI" id="CHEBI:15378"/>
        <dbReference type="ChEBI" id="CHEBI:30023"/>
        <dbReference type="ChEBI" id="CHEBI:57856"/>
        <dbReference type="ChEBI" id="CHEBI:59789"/>
        <dbReference type="ChEBI" id="CHEBI:144381"/>
    </reaction>
    <physiologicalReaction direction="left-to-right" evidence="4">
        <dbReference type="Rhea" id="RHEA:60953"/>
    </physiologicalReaction>
</comment>
<comment type="catalytic activity">
    <reaction evidence="4">
        <text>luteolin + S-adenosyl-L-methionine = chrysoeriol + S-adenosyl-L-homocysteine + H(+)</text>
        <dbReference type="Rhea" id="RHEA:14589"/>
        <dbReference type="ChEBI" id="CHEBI:15378"/>
        <dbReference type="ChEBI" id="CHEBI:57545"/>
        <dbReference type="ChEBI" id="CHEBI:57799"/>
        <dbReference type="ChEBI" id="CHEBI:57856"/>
        <dbReference type="ChEBI" id="CHEBI:59789"/>
    </reaction>
    <physiologicalReaction direction="left-to-right" evidence="4">
        <dbReference type="Rhea" id="RHEA:14590"/>
    </physiologicalReaction>
</comment>
<comment type="catalytic activity">
    <reaction evidence="4">
        <text>quercetin + S-adenosyl-L-methionine = isorhamnetin + S-adenosyl-L-homocysteine + H(+)</text>
        <dbReference type="Rhea" id="RHEA:60944"/>
        <dbReference type="ChEBI" id="CHEBI:15378"/>
        <dbReference type="ChEBI" id="CHEBI:57694"/>
        <dbReference type="ChEBI" id="CHEBI:57856"/>
        <dbReference type="ChEBI" id="CHEBI:59789"/>
        <dbReference type="ChEBI" id="CHEBI:144055"/>
    </reaction>
    <physiologicalReaction direction="left-to-right" evidence="4">
        <dbReference type="Rhea" id="RHEA:60945"/>
    </physiologicalReaction>
</comment>
<comment type="catalytic activity">
    <reaction evidence="4">
        <text>(E)-caffeate + S-adenosyl-L-methionine = (E)-ferulate + S-adenosyl-L-homocysteine + H(+)</text>
        <dbReference type="Rhea" id="RHEA:20225"/>
        <dbReference type="ChEBI" id="CHEBI:15378"/>
        <dbReference type="ChEBI" id="CHEBI:29749"/>
        <dbReference type="ChEBI" id="CHEBI:57770"/>
        <dbReference type="ChEBI" id="CHEBI:57856"/>
        <dbReference type="ChEBI" id="CHEBI:59789"/>
    </reaction>
    <physiologicalReaction direction="left-to-right" evidence="4">
        <dbReference type="Rhea" id="RHEA:20226"/>
    </physiologicalReaction>
</comment>
<comment type="catalytic activity">
    <reaction evidence="4">
        <text>a 3'-hydroxyflavone + S-adenosyl-L-methionine = a 3'-methoxyflavone + S-adenosyl-L-homocysteine + H(+)</text>
        <dbReference type="Rhea" id="RHEA:55332"/>
        <dbReference type="ChEBI" id="CHEBI:15378"/>
        <dbReference type="ChEBI" id="CHEBI:27741"/>
        <dbReference type="ChEBI" id="CHEBI:57856"/>
        <dbReference type="ChEBI" id="CHEBI:59789"/>
        <dbReference type="ChEBI" id="CHEBI:138730"/>
        <dbReference type="EC" id="2.1.1.42"/>
    </reaction>
    <physiologicalReaction direction="left-to-right" evidence="4">
        <dbReference type="Rhea" id="RHEA:55333"/>
    </physiologicalReaction>
</comment>
<comment type="biophysicochemical properties">
    <kinetics>
        <KM evidence="4">2.77 uM for quercetin</KM>
        <KM evidence="4">3.3 uM for luteolin</KM>
        <KM evidence="4">16.22 uM for 5-hydroxyferrulate</KM>
        <KM evidence="4">19.6 uM for caffeate</KM>
        <Vmax evidence="4">18.2 nmol/sec/mg enzyme with quercetin as substrate</Vmax>
        <Vmax evidence="4">18.5 nmol/sec/mg enzyme with luteolin as substrate</Vmax>
        <Vmax evidence="4">82.0 nmol/sec/mg enzyme with 5-hydroxyferrulate as substrate</Vmax>
        <Vmax evidence="4">24.6 nmol/sec/mg enzyme with caffeate as substrate</Vmax>
    </kinetics>
</comment>
<comment type="pathway">
    <text evidence="6">Flavonoid metabolism.</text>
</comment>
<comment type="subunit">
    <text evidence="2">Homodimer.</text>
</comment>
<comment type="similarity">
    <text evidence="6">Belongs to the class I-like SAM-binding methyltransferase superfamily. Cation-independent O-methyltransferase family. COMT subfamily.</text>
</comment>
<comment type="caution">
    <text evidence="6">It is not sure whether OMT1 and OMT2 are really encoded by two different genes or if they represent cloning artifacts.</text>
</comment>
<proteinExistence type="evidence at protein level"/>
<name>OMT2_CHRAE</name>